<name>SOTI_DROPE</name>
<proteinExistence type="inferred from homology"/>
<gene>
    <name evidence="1" type="primary">soti</name>
    <name type="ORF">GL24018</name>
</gene>
<sequence>MDPRLYRLIRFPSNGLGNNNNDPNQQRGERPRQPHPDLGWILDAPNEPPRNRNPLLYLVTAPPRPRKKRSFMTTSKPFRIQTNVSDLQYNAWQAIQDAPPEKRCEYYVKYMDEHMNSQNYPNGVGLPHRWGQF</sequence>
<reference evidence="5" key="1">
    <citation type="journal article" date="2007" name="Nature">
        <title>Evolution of genes and genomes on the Drosophila phylogeny.</title>
        <authorList>
            <consortium name="Drosophila 12 genomes consortium"/>
        </authorList>
    </citation>
    <scope>NUCLEOTIDE SEQUENCE [LARGE SCALE GENOMIC DNA]</scope>
    <source>
        <strain>MSH-3 / Tucson 14011-0111.49</strain>
    </source>
</reference>
<feature type="chain" id="PRO_0000379445" description="Male-specific protein scotti">
    <location>
        <begin position="1"/>
        <end position="133"/>
    </location>
</feature>
<feature type="region of interest" description="Disordered" evidence="3">
    <location>
        <begin position="11"/>
        <end position="57"/>
    </location>
</feature>
<feature type="compositionally biased region" description="Low complexity" evidence="3">
    <location>
        <begin position="14"/>
        <end position="24"/>
    </location>
</feature>
<feature type="glycosylation site" description="N-linked (GlcNAc...) asparagine" evidence="2">
    <location>
        <position position="83"/>
    </location>
</feature>
<organism>
    <name type="scientific">Drosophila persimilis</name>
    <name type="common">Fruit fly</name>
    <dbReference type="NCBI Taxonomy" id="7234"/>
    <lineage>
        <taxon>Eukaryota</taxon>
        <taxon>Metazoa</taxon>
        <taxon>Ecdysozoa</taxon>
        <taxon>Arthropoda</taxon>
        <taxon>Hexapoda</taxon>
        <taxon>Insecta</taxon>
        <taxon>Pterygota</taxon>
        <taxon>Neoptera</taxon>
        <taxon>Endopterygota</taxon>
        <taxon>Diptera</taxon>
        <taxon>Brachycera</taxon>
        <taxon>Muscomorpha</taxon>
        <taxon>Ephydroidea</taxon>
        <taxon>Drosophilidae</taxon>
        <taxon>Drosophila</taxon>
        <taxon>Sophophora</taxon>
    </lineage>
</organism>
<comment type="function">
    <text evidence="1">Post-meiotically transcribed gene that has a role in late spermiogenesis; required for actin cone progression during spermatid individualization.</text>
</comment>
<comment type="similarity">
    <text evidence="4">Belongs to the male-specific scotti family.</text>
</comment>
<dbReference type="EMBL" id="CH479179">
    <property type="protein sequence ID" value="EDW24220.1"/>
    <property type="molecule type" value="Genomic_DNA"/>
</dbReference>
<dbReference type="SMR" id="B4G325"/>
<dbReference type="STRING" id="7234.B4G325"/>
<dbReference type="GlyCosmos" id="B4G325">
    <property type="glycosylation" value="1 site, No reported glycans"/>
</dbReference>
<dbReference type="EnsemblMetazoa" id="FBtr0189633">
    <property type="protein sequence ID" value="FBpp0188125"/>
    <property type="gene ID" value="FBgn0161608"/>
</dbReference>
<dbReference type="EnsemblMetazoa" id="XM_002013198.2">
    <property type="protein sequence ID" value="XP_002013234.1"/>
    <property type="gene ID" value="LOC6587404"/>
</dbReference>
<dbReference type="GeneID" id="6587404"/>
<dbReference type="KEGG" id="dpe:6587404"/>
<dbReference type="HOGENOM" id="CLU_120156_0_0_1"/>
<dbReference type="OMA" id="LPQRWGQ"/>
<dbReference type="OrthoDB" id="7867455at2759"/>
<dbReference type="PhylomeDB" id="B4G325"/>
<dbReference type="Proteomes" id="UP000008744">
    <property type="component" value="Unassembled WGS sequence"/>
</dbReference>
<dbReference type="GO" id="GO:0007291">
    <property type="term" value="P:sperm individualization"/>
    <property type="evidence" value="ECO:0000250"/>
    <property type="project" value="UniProtKB"/>
</dbReference>
<dbReference type="InterPro" id="IPR031397">
    <property type="entry name" value="Soti"/>
</dbReference>
<dbReference type="Pfam" id="PF17079">
    <property type="entry name" value="SOTI"/>
    <property type="match status" value="1"/>
</dbReference>
<accession>B4G325</accession>
<evidence type="ECO:0000250" key="1">
    <source>
        <dbReference type="UniProtKB" id="Q9VFK3"/>
    </source>
</evidence>
<evidence type="ECO:0000255" key="2"/>
<evidence type="ECO:0000256" key="3">
    <source>
        <dbReference type="SAM" id="MobiDB-lite"/>
    </source>
</evidence>
<evidence type="ECO:0000305" key="4"/>
<evidence type="ECO:0000312" key="5">
    <source>
        <dbReference type="EMBL" id="EDW24220.1"/>
    </source>
</evidence>
<keyword id="KW-0217">Developmental protein</keyword>
<keyword id="KW-0221">Differentiation</keyword>
<keyword id="KW-0325">Glycoprotein</keyword>
<keyword id="KW-1185">Reference proteome</keyword>
<keyword id="KW-0744">Spermatogenesis</keyword>
<protein>
    <recommendedName>
        <fullName evidence="1">Male-specific protein scotti</fullName>
    </recommendedName>
</protein>